<feature type="chain" id="PRO_1000100263" description="Dihydroorotate dehydrogenase (quinone)">
    <location>
        <begin position="1"/>
        <end position="336"/>
    </location>
</feature>
<feature type="active site" description="Nucleophile" evidence="1">
    <location>
        <position position="175"/>
    </location>
</feature>
<feature type="binding site" evidence="1">
    <location>
        <begin position="62"/>
        <end position="66"/>
    </location>
    <ligand>
        <name>FMN</name>
        <dbReference type="ChEBI" id="CHEBI:58210"/>
    </ligand>
</feature>
<feature type="binding site" evidence="1">
    <location>
        <position position="66"/>
    </location>
    <ligand>
        <name>substrate</name>
    </ligand>
</feature>
<feature type="binding site" evidence="1">
    <location>
        <position position="86"/>
    </location>
    <ligand>
        <name>FMN</name>
        <dbReference type="ChEBI" id="CHEBI:58210"/>
    </ligand>
</feature>
<feature type="binding site" evidence="1">
    <location>
        <begin position="111"/>
        <end position="115"/>
    </location>
    <ligand>
        <name>substrate</name>
    </ligand>
</feature>
<feature type="binding site" evidence="1">
    <location>
        <position position="139"/>
    </location>
    <ligand>
        <name>FMN</name>
        <dbReference type="ChEBI" id="CHEBI:58210"/>
    </ligand>
</feature>
<feature type="binding site" evidence="1">
    <location>
        <position position="172"/>
    </location>
    <ligand>
        <name>FMN</name>
        <dbReference type="ChEBI" id="CHEBI:58210"/>
    </ligand>
</feature>
<feature type="binding site" evidence="1">
    <location>
        <position position="172"/>
    </location>
    <ligand>
        <name>substrate</name>
    </ligand>
</feature>
<feature type="binding site" evidence="1">
    <location>
        <position position="177"/>
    </location>
    <ligand>
        <name>substrate</name>
    </ligand>
</feature>
<feature type="binding site" evidence="1">
    <location>
        <position position="217"/>
    </location>
    <ligand>
        <name>FMN</name>
        <dbReference type="ChEBI" id="CHEBI:58210"/>
    </ligand>
</feature>
<feature type="binding site" evidence="1">
    <location>
        <position position="245"/>
    </location>
    <ligand>
        <name>FMN</name>
        <dbReference type="ChEBI" id="CHEBI:58210"/>
    </ligand>
</feature>
<feature type="binding site" evidence="1">
    <location>
        <begin position="246"/>
        <end position="247"/>
    </location>
    <ligand>
        <name>substrate</name>
    </ligand>
</feature>
<feature type="binding site" evidence="1">
    <location>
        <position position="268"/>
    </location>
    <ligand>
        <name>FMN</name>
        <dbReference type="ChEBI" id="CHEBI:58210"/>
    </ligand>
</feature>
<feature type="binding site" evidence="1">
    <location>
        <position position="297"/>
    </location>
    <ligand>
        <name>FMN</name>
        <dbReference type="ChEBI" id="CHEBI:58210"/>
    </ligand>
</feature>
<feature type="binding site" evidence="1">
    <location>
        <begin position="318"/>
        <end position="319"/>
    </location>
    <ligand>
        <name>FMN</name>
        <dbReference type="ChEBI" id="CHEBI:58210"/>
    </ligand>
</feature>
<protein>
    <recommendedName>
        <fullName evidence="1">Dihydroorotate dehydrogenase (quinone)</fullName>
        <ecNumber evidence="1">1.3.5.2</ecNumber>
    </recommendedName>
    <alternativeName>
        <fullName evidence="1">DHOdehase</fullName>
        <shortName evidence="1">DHOD</shortName>
        <shortName evidence="1">DHODase</shortName>
    </alternativeName>
    <alternativeName>
        <fullName evidence="1">Dihydroorotate oxidase</fullName>
    </alternativeName>
</protein>
<organism>
    <name type="scientific">Escherichia coli (strain SE11)</name>
    <dbReference type="NCBI Taxonomy" id="409438"/>
    <lineage>
        <taxon>Bacteria</taxon>
        <taxon>Pseudomonadati</taxon>
        <taxon>Pseudomonadota</taxon>
        <taxon>Gammaproteobacteria</taxon>
        <taxon>Enterobacterales</taxon>
        <taxon>Enterobacteriaceae</taxon>
        <taxon>Escherichia</taxon>
    </lineage>
</organism>
<gene>
    <name evidence="1" type="primary">pyrD</name>
    <name type="ordered locus">ECSE_1006</name>
</gene>
<accession>B6I919</accession>
<dbReference type="EC" id="1.3.5.2" evidence="1"/>
<dbReference type="EMBL" id="AP009240">
    <property type="protein sequence ID" value="BAG76530.1"/>
    <property type="molecule type" value="Genomic_DNA"/>
</dbReference>
<dbReference type="RefSeq" id="WP_001295352.1">
    <property type="nucleotide sequence ID" value="NC_011415.1"/>
</dbReference>
<dbReference type="SMR" id="B6I919"/>
<dbReference type="GeneID" id="93776469"/>
<dbReference type="KEGG" id="ecy:ECSE_1006"/>
<dbReference type="HOGENOM" id="CLU_013640_2_0_6"/>
<dbReference type="UniPathway" id="UPA00070">
    <property type="reaction ID" value="UER00946"/>
</dbReference>
<dbReference type="Proteomes" id="UP000008199">
    <property type="component" value="Chromosome"/>
</dbReference>
<dbReference type="GO" id="GO:0005737">
    <property type="term" value="C:cytoplasm"/>
    <property type="evidence" value="ECO:0007669"/>
    <property type="project" value="InterPro"/>
</dbReference>
<dbReference type="GO" id="GO:0005886">
    <property type="term" value="C:plasma membrane"/>
    <property type="evidence" value="ECO:0007669"/>
    <property type="project" value="UniProtKB-SubCell"/>
</dbReference>
<dbReference type="GO" id="GO:0106430">
    <property type="term" value="F:dihydroorotate dehydrogenase (quinone) activity"/>
    <property type="evidence" value="ECO:0007669"/>
    <property type="project" value="UniProtKB-EC"/>
</dbReference>
<dbReference type="GO" id="GO:0006207">
    <property type="term" value="P:'de novo' pyrimidine nucleobase biosynthetic process"/>
    <property type="evidence" value="ECO:0007669"/>
    <property type="project" value="InterPro"/>
</dbReference>
<dbReference type="GO" id="GO:0044205">
    <property type="term" value="P:'de novo' UMP biosynthetic process"/>
    <property type="evidence" value="ECO:0007669"/>
    <property type="project" value="UniProtKB-UniRule"/>
</dbReference>
<dbReference type="CDD" id="cd04738">
    <property type="entry name" value="DHOD_2_like"/>
    <property type="match status" value="1"/>
</dbReference>
<dbReference type="FunFam" id="3.20.20.70:FF:000028">
    <property type="entry name" value="Dihydroorotate dehydrogenase (quinone)"/>
    <property type="match status" value="1"/>
</dbReference>
<dbReference type="Gene3D" id="3.20.20.70">
    <property type="entry name" value="Aldolase class I"/>
    <property type="match status" value="1"/>
</dbReference>
<dbReference type="HAMAP" id="MF_00225">
    <property type="entry name" value="DHO_dh_type2"/>
    <property type="match status" value="1"/>
</dbReference>
<dbReference type="InterPro" id="IPR013785">
    <property type="entry name" value="Aldolase_TIM"/>
</dbReference>
<dbReference type="InterPro" id="IPR050074">
    <property type="entry name" value="DHO_dehydrogenase"/>
</dbReference>
<dbReference type="InterPro" id="IPR012135">
    <property type="entry name" value="Dihydroorotate_DH_1_2"/>
</dbReference>
<dbReference type="InterPro" id="IPR005719">
    <property type="entry name" value="Dihydroorotate_DH_2"/>
</dbReference>
<dbReference type="InterPro" id="IPR005720">
    <property type="entry name" value="Dihydroorotate_DH_cat"/>
</dbReference>
<dbReference type="InterPro" id="IPR001295">
    <property type="entry name" value="Dihydroorotate_DH_CS"/>
</dbReference>
<dbReference type="NCBIfam" id="NF003644">
    <property type="entry name" value="PRK05286.1-1"/>
    <property type="match status" value="1"/>
</dbReference>
<dbReference type="NCBIfam" id="NF003645">
    <property type="entry name" value="PRK05286.1-2"/>
    <property type="match status" value="1"/>
</dbReference>
<dbReference type="NCBIfam" id="NF003646">
    <property type="entry name" value="PRK05286.1-4"/>
    <property type="match status" value="1"/>
</dbReference>
<dbReference type="NCBIfam" id="NF003652">
    <property type="entry name" value="PRK05286.2-5"/>
    <property type="match status" value="1"/>
</dbReference>
<dbReference type="NCBIfam" id="TIGR01036">
    <property type="entry name" value="pyrD_sub2"/>
    <property type="match status" value="1"/>
</dbReference>
<dbReference type="PANTHER" id="PTHR48109:SF4">
    <property type="entry name" value="DIHYDROOROTATE DEHYDROGENASE (QUINONE), MITOCHONDRIAL"/>
    <property type="match status" value="1"/>
</dbReference>
<dbReference type="PANTHER" id="PTHR48109">
    <property type="entry name" value="DIHYDROOROTATE DEHYDROGENASE (QUINONE), MITOCHONDRIAL-RELATED"/>
    <property type="match status" value="1"/>
</dbReference>
<dbReference type="Pfam" id="PF01180">
    <property type="entry name" value="DHO_dh"/>
    <property type="match status" value="1"/>
</dbReference>
<dbReference type="PIRSF" id="PIRSF000164">
    <property type="entry name" value="DHO_oxidase"/>
    <property type="match status" value="1"/>
</dbReference>
<dbReference type="SUPFAM" id="SSF51395">
    <property type="entry name" value="FMN-linked oxidoreductases"/>
    <property type="match status" value="1"/>
</dbReference>
<dbReference type="PROSITE" id="PS00911">
    <property type="entry name" value="DHODEHASE_1"/>
    <property type="match status" value="1"/>
</dbReference>
<dbReference type="PROSITE" id="PS00912">
    <property type="entry name" value="DHODEHASE_2"/>
    <property type="match status" value="1"/>
</dbReference>
<sequence>MYYPFVRKALFQLDPERAHEFTFQQLRRITGTPFEALVRQKVPAKPVNCMGLTFKNPLGLAAGLDKDGECIDALGAMGFGSIEIGTVTPRPQPGNDKPRLFRLVDAEGLINRMGFNNLGVDNLVENVKKAHYDGVLGINIGKNKDTPVEQGKDDYLICMEKIYAYAGYIAINISSPNTPGLRTLQYGEALDDLLTAIKNKQNDLQAMHHKYVPIAVKIAPDLSEEELIQVADSLVRHNIDGVIATNTTLDRSLVQGMKNCDQTGGLSGRPLQLKSTEIIRRLSLELNGRLPIIGVGGIDSVIAAREKIAAGASLVQIYSGFIFKGPPLIKEIVTHI</sequence>
<proteinExistence type="inferred from homology"/>
<name>PYRD_ECOSE</name>
<comment type="function">
    <text evidence="1">Catalyzes the conversion of dihydroorotate to orotate with quinone as electron acceptor.</text>
</comment>
<comment type="catalytic activity">
    <reaction evidence="1">
        <text>(S)-dihydroorotate + a quinone = orotate + a quinol</text>
        <dbReference type="Rhea" id="RHEA:30187"/>
        <dbReference type="ChEBI" id="CHEBI:24646"/>
        <dbReference type="ChEBI" id="CHEBI:30839"/>
        <dbReference type="ChEBI" id="CHEBI:30864"/>
        <dbReference type="ChEBI" id="CHEBI:132124"/>
        <dbReference type="EC" id="1.3.5.2"/>
    </reaction>
</comment>
<comment type="cofactor">
    <cofactor evidence="1">
        <name>FMN</name>
        <dbReference type="ChEBI" id="CHEBI:58210"/>
    </cofactor>
    <text evidence="1">Binds 1 FMN per subunit.</text>
</comment>
<comment type="pathway">
    <text evidence="1">Pyrimidine metabolism; UMP biosynthesis via de novo pathway; orotate from (S)-dihydroorotate (quinone route): step 1/1.</text>
</comment>
<comment type="subunit">
    <text evidence="1">Monomer.</text>
</comment>
<comment type="subcellular location">
    <subcellularLocation>
        <location evidence="1">Cell membrane</location>
        <topology evidence="1">Peripheral membrane protein</topology>
    </subcellularLocation>
</comment>
<comment type="similarity">
    <text evidence="1">Belongs to the dihydroorotate dehydrogenase family. Type 2 subfamily.</text>
</comment>
<reference key="1">
    <citation type="journal article" date="2008" name="DNA Res.">
        <title>Complete genome sequence and comparative analysis of the wild-type commensal Escherichia coli strain SE11 isolated from a healthy adult.</title>
        <authorList>
            <person name="Oshima K."/>
            <person name="Toh H."/>
            <person name="Ogura Y."/>
            <person name="Sasamoto H."/>
            <person name="Morita H."/>
            <person name="Park S.-H."/>
            <person name="Ooka T."/>
            <person name="Iyoda S."/>
            <person name="Taylor T.D."/>
            <person name="Hayashi T."/>
            <person name="Itoh K."/>
            <person name="Hattori M."/>
        </authorList>
    </citation>
    <scope>NUCLEOTIDE SEQUENCE [LARGE SCALE GENOMIC DNA]</scope>
    <source>
        <strain>SE11</strain>
    </source>
</reference>
<keyword id="KW-1003">Cell membrane</keyword>
<keyword id="KW-0285">Flavoprotein</keyword>
<keyword id="KW-0288">FMN</keyword>
<keyword id="KW-0472">Membrane</keyword>
<keyword id="KW-0560">Oxidoreductase</keyword>
<keyword id="KW-0665">Pyrimidine biosynthesis</keyword>
<evidence type="ECO:0000255" key="1">
    <source>
        <dbReference type="HAMAP-Rule" id="MF_00225"/>
    </source>
</evidence>